<proteinExistence type="inferred from homology"/>
<feature type="chain" id="PRO_0000112760" description="Acetylornithine aminotransferase">
    <location>
        <begin position="1"/>
        <end position="398"/>
    </location>
</feature>
<feature type="binding site" evidence="1">
    <location>
        <position position="129"/>
    </location>
    <ligand>
        <name>pyridoxal 5'-phosphate</name>
        <dbReference type="ChEBI" id="CHEBI:597326"/>
    </ligand>
</feature>
<feature type="binding site" evidence="1">
    <location>
        <position position="132"/>
    </location>
    <ligand>
        <name>N(2)-acetyl-L-ornithine</name>
        <dbReference type="ChEBI" id="CHEBI:57805"/>
    </ligand>
</feature>
<feature type="binding site" evidence="1">
    <location>
        <begin position="214"/>
        <end position="217"/>
    </location>
    <ligand>
        <name>pyridoxal 5'-phosphate</name>
        <dbReference type="ChEBI" id="CHEBI:597326"/>
    </ligand>
</feature>
<feature type="binding site" evidence="1">
    <location>
        <position position="271"/>
    </location>
    <ligand>
        <name>N(2)-acetyl-L-ornithine</name>
        <dbReference type="ChEBI" id="CHEBI:57805"/>
    </ligand>
</feature>
<feature type="binding site" evidence="1">
    <location>
        <position position="272"/>
    </location>
    <ligand>
        <name>pyridoxal 5'-phosphate</name>
        <dbReference type="ChEBI" id="CHEBI:597326"/>
    </ligand>
</feature>
<feature type="modified residue" description="N6-(pyridoxal phosphate)lysine" evidence="1">
    <location>
        <position position="243"/>
    </location>
</feature>
<dbReference type="EC" id="2.6.1.11" evidence="1"/>
<dbReference type="EMBL" id="AE002098">
    <property type="protein sequence ID" value="AAF41745.1"/>
    <property type="molecule type" value="Genomic_DNA"/>
</dbReference>
<dbReference type="PIR" id="H81090">
    <property type="entry name" value="H81090"/>
</dbReference>
<dbReference type="RefSeq" id="NP_274389.1">
    <property type="nucleotide sequence ID" value="NC_003112.2"/>
</dbReference>
<dbReference type="RefSeq" id="WP_002222328.1">
    <property type="nucleotide sequence ID" value="NC_003112.2"/>
</dbReference>
<dbReference type="SMR" id="Q9JYY4"/>
<dbReference type="FunCoup" id="Q9JYY4">
    <property type="interactions" value="481"/>
</dbReference>
<dbReference type="STRING" id="122586.NMB1371"/>
<dbReference type="PaxDb" id="122586-NMB1371"/>
<dbReference type="KEGG" id="nme:NMB1371"/>
<dbReference type="PATRIC" id="fig|122586.8.peg.1718"/>
<dbReference type="HOGENOM" id="CLU_016922_10_1_4"/>
<dbReference type="InParanoid" id="Q9JYY4"/>
<dbReference type="OrthoDB" id="3398487at2"/>
<dbReference type="UniPathway" id="UPA00068">
    <property type="reaction ID" value="UER00109"/>
</dbReference>
<dbReference type="Proteomes" id="UP000000425">
    <property type="component" value="Chromosome"/>
</dbReference>
<dbReference type="GO" id="GO:0005737">
    <property type="term" value="C:cytoplasm"/>
    <property type="evidence" value="ECO:0007669"/>
    <property type="project" value="UniProtKB-SubCell"/>
</dbReference>
<dbReference type="GO" id="GO:0042802">
    <property type="term" value="F:identical protein binding"/>
    <property type="evidence" value="ECO:0000318"/>
    <property type="project" value="GO_Central"/>
</dbReference>
<dbReference type="GO" id="GO:0003992">
    <property type="term" value="F:N2-acetyl-L-ornithine:2-oxoglutarate 5-aminotransferase activity"/>
    <property type="evidence" value="ECO:0007669"/>
    <property type="project" value="UniProtKB-UniRule"/>
</dbReference>
<dbReference type="GO" id="GO:0030170">
    <property type="term" value="F:pyridoxal phosphate binding"/>
    <property type="evidence" value="ECO:0000318"/>
    <property type="project" value="GO_Central"/>
</dbReference>
<dbReference type="GO" id="GO:0006526">
    <property type="term" value="P:L-arginine biosynthetic process"/>
    <property type="evidence" value="ECO:0007669"/>
    <property type="project" value="UniProtKB-UniRule"/>
</dbReference>
<dbReference type="CDD" id="cd00610">
    <property type="entry name" value="OAT_like"/>
    <property type="match status" value="1"/>
</dbReference>
<dbReference type="FunFam" id="3.40.640.10:FF:000004">
    <property type="entry name" value="Acetylornithine aminotransferase"/>
    <property type="match status" value="1"/>
</dbReference>
<dbReference type="Gene3D" id="3.90.1150.10">
    <property type="entry name" value="Aspartate Aminotransferase, domain 1"/>
    <property type="match status" value="1"/>
</dbReference>
<dbReference type="Gene3D" id="3.40.640.10">
    <property type="entry name" value="Type I PLP-dependent aspartate aminotransferase-like (Major domain)"/>
    <property type="match status" value="1"/>
</dbReference>
<dbReference type="HAMAP" id="MF_01107">
    <property type="entry name" value="ArgD_aminotrans_3"/>
    <property type="match status" value="1"/>
</dbReference>
<dbReference type="InterPro" id="IPR017652">
    <property type="entry name" value="Ac/SucOrn_transaminase_bac"/>
</dbReference>
<dbReference type="InterPro" id="IPR004636">
    <property type="entry name" value="AcOrn/SuccOrn_fam"/>
</dbReference>
<dbReference type="InterPro" id="IPR005814">
    <property type="entry name" value="Aminotrans_3"/>
</dbReference>
<dbReference type="InterPro" id="IPR049704">
    <property type="entry name" value="Aminotrans_3_PPA_site"/>
</dbReference>
<dbReference type="InterPro" id="IPR050103">
    <property type="entry name" value="Class-III_PLP-dep_AT"/>
</dbReference>
<dbReference type="InterPro" id="IPR015424">
    <property type="entry name" value="PyrdxlP-dep_Trfase"/>
</dbReference>
<dbReference type="InterPro" id="IPR015421">
    <property type="entry name" value="PyrdxlP-dep_Trfase_major"/>
</dbReference>
<dbReference type="InterPro" id="IPR015422">
    <property type="entry name" value="PyrdxlP-dep_Trfase_small"/>
</dbReference>
<dbReference type="NCBIfam" id="TIGR03246">
    <property type="entry name" value="arg_catab_astC"/>
    <property type="match status" value="1"/>
</dbReference>
<dbReference type="NCBIfam" id="TIGR00707">
    <property type="entry name" value="argD"/>
    <property type="match status" value="1"/>
</dbReference>
<dbReference type="NCBIfam" id="NF002325">
    <property type="entry name" value="PRK01278.1"/>
    <property type="match status" value="1"/>
</dbReference>
<dbReference type="NCBIfam" id="NF003468">
    <property type="entry name" value="PRK05093.1"/>
    <property type="match status" value="1"/>
</dbReference>
<dbReference type="PANTHER" id="PTHR11986">
    <property type="entry name" value="AMINOTRANSFERASE CLASS III"/>
    <property type="match status" value="1"/>
</dbReference>
<dbReference type="PANTHER" id="PTHR11986:SF113">
    <property type="entry name" value="SUCCINYLORNITHINE TRANSAMINASE"/>
    <property type="match status" value="1"/>
</dbReference>
<dbReference type="Pfam" id="PF00202">
    <property type="entry name" value="Aminotran_3"/>
    <property type="match status" value="1"/>
</dbReference>
<dbReference type="PIRSF" id="PIRSF000521">
    <property type="entry name" value="Transaminase_4ab_Lys_Orn"/>
    <property type="match status" value="1"/>
</dbReference>
<dbReference type="SUPFAM" id="SSF53383">
    <property type="entry name" value="PLP-dependent transferases"/>
    <property type="match status" value="1"/>
</dbReference>
<dbReference type="PROSITE" id="PS00600">
    <property type="entry name" value="AA_TRANSFER_CLASS_3"/>
    <property type="match status" value="1"/>
</dbReference>
<organism>
    <name type="scientific">Neisseria meningitidis serogroup B (strain ATCC BAA-335 / MC58)</name>
    <dbReference type="NCBI Taxonomy" id="122586"/>
    <lineage>
        <taxon>Bacteria</taxon>
        <taxon>Pseudomonadati</taxon>
        <taxon>Pseudomonadota</taxon>
        <taxon>Betaproteobacteria</taxon>
        <taxon>Neisseriales</taxon>
        <taxon>Neisseriaceae</taxon>
        <taxon>Neisseria</taxon>
    </lineage>
</organism>
<comment type="catalytic activity">
    <reaction evidence="1">
        <text>N(2)-acetyl-L-ornithine + 2-oxoglutarate = N-acetyl-L-glutamate 5-semialdehyde + L-glutamate</text>
        <dbReference type="Rhea" id="RHEA:18049"/>
        <dbReference type="ChEBI" id="CHEBI:16810"/>
        <dbReference type="ChEBI" id="CHEBI:29123"/>
        <dbReference type="ChEBI" id="CHEBI:29985"/>
        <dbReference type="ChEBI" id="CHEBI:57805"/>
        <dbReference type="EC" id="2.6.1.11"/>
    </reaction>
</comment>
<comment type="cofactor">
    <cofactor evidence="1">
        <name>pyridoxal 5'-phosphate</name>
        <dbReference type="ChEBI" id="CHEBI:597326"/>
    </cofactor>
    <text evidence="1">Binds 1 pyridoxal phosphate per subunit.</text>
</comment>
<comment type="pathway">
    <text evidence="1">Amino-acid biosynthesis; L-arginine biosynthesis; N(2)-acetyl-L-ornithine from L-glutamate: step 4/4.</text>
</comment>
<comment type="subunit">
    <text evidence="1">Homodimer.</text>
</comment>
<comment type="subcellular location">
    <subcellularLocation>
        <location evidence="1">Cytoplasm</location>
    </subcellularLocation>
</comment>
<comment type="miscellaneous">
    <text evidence="1">May also have succinyldiaminopimelate aminotransferase activity, thus carrying out the corresponding step in lysine biosynthesis.</text>
</comment>
<comment type="similarity">
    <text evidence="1">Belongs to the class-III pyridoxal-phosphate-dependent aminotransferase family. ArgD subfamily.</text>
</comment>
<name>ARGD_NEIMB</name>
<evidence type="ECO:0000255" key="1">
    <source>
        <dbReference type="HAMAP-Rule" id="MF_01107"/>
    </source>
</evidence>
<protein>
    <recommendedName>
        <fullName evidence="1">Acetylornithine aminotransferase</fullName>
        <shortName evidence="1">ACOAT</shortName>
        <ecNumber evidence="1">2.6.1.11</ecNumber>
    </recommendedName>
</protein>
<keyword id="KW-0028">Amino-acid biosynthesis</keyword>
<keyword id="KW-0032">Aminotransferase</keyword>
<keyword id="KW-0055">Arginine biosynthesis</keyword>
<keyword id="KW-0963">Cytoplasm</keyword>
<keyword id="KW-0663">Pyridoxal phosphate</keyword>
<keyword id="KW-1185">Reference proteome</keyword>
<keyword id="KW-0808">Transferase</keyword>
<sequence length="398" mass="42815">MQNYLTPNFAFAPMIPERASGSRVWDTKGREYIDFSGGIAVNALGHCHPALVDALNAQMHKLWHISNIYTTRPAQELAQKLVANSFADKVFFCNSGSEANEAALKLARKYARDRFGGGKSEIVACINSFHGRTLFTVSVGGQPKYSKDYAPLPQGITHVPFNDIAALEAAVGEQTCAVIIEPIQGESGILPATAEYLQTARRLCDRHNALLILDEVQTGMGHTGRLFAYEHYGIVPDILSSAKALGCGFPIGAMLATEKIAAAFQPGTHGSTFGGNPMACAVGSRAFDIINTPETLNHVREQGQKLQTALLDLCRKTGLFSQVRGMGLLLGCVLDEAYRGRASEITAAALKHGVMILVAGADVLRFAPSLLLNDEDMAEGLRRLEHALTEFAATSDNP</sequence>
<reference key="1">
    <citation type="journal article" date="2000" name="Science">
        <title>Complete genome sequence of Neisseria meningitidis serogroup B strain MC58.</title>
        <authorList>
            <person name="Tettelin H."/>
            <person name="Saunders N.J."/>
            <person name="Heidelberg J.F."/>
            <person name="Jeffries A.C."/>
            <person name="Nelson K.E."/>
            <person name="Eisen J.A."/>
            <person name="Ketchum K.A."/>
            <person name="Hood D.W."/>
            <person name="Peden J.F."/>
            <person name="Dodson R.J."/>
            <person name="Nelson W.C."/>
            <person name="Gwinn M.L."/>
            <person name="DeBoy R.T."/>
            <person name="Peterson J.D."/>
            <person name="Hickey E.K."/>
            <person name="Haft D.H."/>
            <person name="Salzberg S.L."/>
            <person name="White O."/>
            <person name="Fleischmann R.D."/>
            <person name="Dougherty B.A."/>
            <person name="Mason T.M."/>
            <person name="Ciecko A."/>
            <person name="Parksey D.S."/>
            <person name="Blair E."/>
            <person name="Cittone H."/>
            <person name="Clark E.B."/>
            <person name="Cotton M.D."/>
            <person name="Utterback T.R."/>
            <person name="Khouri H.M."/>
            <person name="Qin H."/>
            <person name="Vamathevan J.J."/>
            <person name="Gill J."/>
            <person name="Scarlato V."/>
            <person name="Masignani V."/>
            <person name="Pizza M."/>
            <person name="Grandi G."/>
            <person name="Sun L."/>
            <person name="Smith H.O."/>
            <person name="Fraser C.M."/>
            <person name="Moxon E.R."/>
            <person name="Rappuoli R."/>
            <person name="Venter J.C."/>
        </authorList>
    </citation>
    <scope>NUCLEOTIDE SEQUENCE [LARGE SCALE GENOMIC DNA]</scope>
    <source>
        <strain>ATCC BAA-335 / MC58</strain>
    </source>
</reference>
<accession>Q9JYY4</accession>
<gene>
    <name evidence="1" type="primary">argD</name>
    <name type="ordered locus">NMB1371</name>
</gene>